<feature type="chain" id="PRO_0000417402" description="Nucleolin 1">
    <location>
        <begin position="1"/>
        <end position="572"/>
    </location>
</feature>
<feature type="domain" description="RRM 1" evidence="2">
    <location>
        <begin position="311"/>
        <end position="387"/>
    </location>
</feature>
<feature type="domain" description="RRM 2" evidence="2">
    <location>
        <begin position="411"/>
        <end position="492"/>
    </location>
</feature>
<feature type="region of interest" description="Disordered" evidence="3">
    <location>
        <begin position="1"/>
        <end position="312"/>
    </location>
</feature>
<feature type="region of interest" description="Disordered" evidence="3">
    <location>
        <begin position="488"/>
        <end position="572"/>
    </location>
</feature>
<feature type="compositionally biased region" description="Low complexity" evidence="3">
    <location>
        <begin position="7"/>
        <end position="21"/>
    </location>
</feature>
<feature type="compositionally biased region" description="Basic and acidic residues" evidence="3">
    <location>
        <begin position="27"/>
        <end position="38"/>
    </location>
</feature>
<feature type="compositionally biased region" description="Low complexity" evidence="3">
    <location>
        <begin position="45"/>
        <end position="58"/>
    </location>
</feature>
<feature type="compositionally biased region" description="Low complexity" evidence="3">
    <location>
        <begin position="72"/>
        <end position="81"/>
    </location>
</feature>
<feature type="compositionally biased region" description="Acidic residues" evidence="3">
    <location>
        <begin position="82"/>
        <end position="91"/>
    </location>
</feature>
<feature type="compositionally biased region" description="Acidic residues" evidence="3">
    <location>
        <begin position="109"/>
        <end position="122"/>
    </location>
</feature>
<feature type="compositionally biased region" description="Acidic residues" evidence="3">
    <location>
        <begin position="144"/>
        <end position="156"/>
    </location>
</feature>
<feature type="compositionally biased region" description="Acidic residues" evidence="3">
    <location>
        <begin position="177"/>
        <end position="191"/>
    </location>
</feature>
<feature type="compositionally biased region" description="Acidic residues" evidence="3">
    <location>
        <begin position="208"/>
        <end position="222"/>
    </location>
</feature>
<feature type="compositionally biased region" description="Acidic residues" evidence="3">
    <location>
        <begin position="235"/>
        <end position="247"/>
    </location>
</feature>
<feature type="compositionally biased region" description="Acidic residues" evidence="3">
    <location>
        <begin position="261"/>
        <end position="276"/>
    </location>
</feature>
<feature type="compositionally biased region" description="Polar residues" evidence="3">
    <location>
        <begin position="300"/>
        <end position="311"/>
    </location>
</feature>
<feature type="compositionally biased region" description="Basic and acidic residues" evidence="3">
    <location>
        <begin position="488"/>
        <end position="520"/>
    </location>
</feature>
<feature type="compositionally biased region" description="Basic and acidic residues" evidence="3">
    <location>
        <begin position="528"/>
        <end position="545"/>
    </location>
</feature>
<feature type="compositionally biased region" description="Polar residues" evidence="3">
    <location>
        <begin position="553"/>
        <end position="566"/>
    </location>
</feature>
<reference key="1">
    <citation type="journal article" date="2005" name="Nature">
        <title>The map-based sequence of the rice genome.</title>
        <authorList>
            <consortium name="International rice genome sequencing project (IRGSP)"/>
        </authorList>
    </citation>
    <scope>NUCLEOTIDE SEQUENCE [LARGE SCALE GENOMIC DNA]</scope>
    <source>
        <strain>cv. Nipponbare</strain>
    </source>
</reference>
<reference key="2">
    <citation type="journal article" date="2008" name="Nucleic Acids Res.">
        <title>The rice annotation project database (RAP-DB): 2008 update.</title>
        <authorList>
            <consortium name="The rice annotation project (RAP)"/>
        </authorList>
    </citation>
    <scope>GENOME REANNOTATION</scope>
    <source>
        <strain>cv. Nipponbare</strain>
    </source>
</reference>
<reference key="3">
    <citation type="journal article" date="2013" name="Rice">
        <title>Improvement of the Oryza sativa Nipponbare reference genome using next generation sequence and optical map data.</title>
        <authorList>
            <person name="Kawahara Y."/>
            <person name="de la Bastide M."/>
            <person name="Hamilton J.P."/>
            <person name="Kanamori H."/>
            <person name="McCombie W.R."/>
            <person name="Ouyang S."/>
            <person name="Schwartz D.C."/>
            <person name="Tanaka T."/>
            <person name="Wu J."/>
            <person name="Zhou S."/>
            <person name="Childs K.L."/>
            <person name="Davidson R.M."/>
            <person name="Lin H."/>
            <person name="Quesada-Ocampo L."/>
            <person name="Vaillancourt B."/>
            <person name="Sakai H."/>
            <person name="Lee S.S."/>
            <person name="Kim J."/>
            <person name="Numa H."/>
            <person name="Itoh T."/>
            <person name="Buell C.R."/>
            <person name="Matsumoto T."/>
        </authorList>
    </citation>
    <scope>GENOME REANNOTATION</scope>
    <source>
        <strain>cv. Nipponbare</strain>
    </source>
</reference>
<reference key="4">
    <citation type="journal article" date="2005" name="PLoS Biol.">
        <title>The genomes of Oryza sativa: a history of duplications.</title>
        <authorList>
            <person name="Yu J."/>
            <person name="Wang J."/>
            <person name="Lin W."/>
            <person name="Li S."/>
            <person name="Li H."/>
            <person name="Zhou J."/>
            <person name="Ni P."/>
            <person name="Dong W."/>
            <person name="Hu S."/>
            <person name="Zeng C."/>
            <person name="Zhang J."/>
            <person name="Zhang Y."/>
            <person name="Li R."/>
            <person name="Xu Z."/>
            <person name="Li S."/>
            <person name="Li X."/>
            <person name="Zheng H."/>
            <person name="Cong L."/>
            <person name="Lin L."/>
            <person name="Yin J."/>
            <person name="Geng J."/>
            <person name="Li G."/>
            <person name="Shi J."/>
            <person name="Liu J."/>
            <person name="Lv H."/>
            <person name="Li J."/>
            <person name="Wang J."/>
            <person name="Deng Y."/>
            <person name="Ran L."/>
            <person name="Shi X."/>
            <person name="Wang X."/>
            <person name="Wu Q."/>
            <person name="Li C."/>
            <person name="Ren X."/>
            <person name="Wang J."/>
            <person name="Wang X."/>
            <person name="Li D."/>
            <person name="Liu D."/>
            <person name="Zhang X."/>
            <person name="Ji Z."/>
            <person name="Zhao W."/>
            <person name="Sun Y."/>
            <person name="Zhang Z."/>
            <person name="Bao J."/>
            <person name="Han Y."/>
            <person name="Dong L."/>
            <person name="Ji J."/>
            <person name="Chen P."/>
            <person name="Wu S."/>
            <person name="Liu J."/>
            <person name="Xiao Y."/>
            <person name="Bu D."/>
            <person name="Tan J."/>
            <person name="Yang L."/>
            <person name="Ye C."/>
            <person name="Zhang J."/>
            <person name="Xu J."/>
            <person name="Zhou Y."/>
            <person name="Yu Y."/>
            <person name="Zhang B."/>
            <person name="Zhuang S."/>
            <person name="Wei H."/>
            <person name="Liu B."/>
            <person name="Lei M."/>
            <person name="Yu H."/>
            <person name="Li Y."/>
            <person name="Xu H."/>
            <person name="Wei S."/>
            <person name="He X."/>
            <person name="Fang L."/>
            <person name="Zhang Z."/>
            <person name="Zhang Y."/>
            <person name="Huang X."/>
            <person name="Su Z."/>
            <person name="Tong W."/>
            <person name="Li J."/>
            <person name="Tong Z."/>
            <person name="Li S."/>
            <person name="Ye J."/>
            <person name="Wang L."/>
            <person name="Fang L."/>
            <person name="Lei T."/>
            <person name="Chen C.-S."/>
            <person name="Chen H.-C."/>
            <person name="Xu Z."/>
            <person name="Li H."/>
            <person name="Huang H."/>
            <person name="Zhang F."/>
            <person name="Xu H."/>
            <person name="Li N."/>
            <person name="Zhao C."/>
            <person name="Li S."/>
            <person name="Dong L."/>
            <person name="Huang Y."/>
            <person name="Li L."/>
            <person name="Xi Y."/>
            <person name="Qi Q."/>
            <person name="Li W."/>
            <person name="Zhang B."/>
            <person name="Hu W."/>
            <person name="Zhang Y."/>
            <person name="Tian X."/>
            <person name="Jiao Y."/>
            <person name="Liang X."/>
            <person name="Jin J."/>
            <person name="Gao L."/>
            <person name="Zheng W."/>
            <person name="Hao B."/>
            <person name="Liu S.-M."/>
            <person name="Wang W."/>
            <person name="Yuan L."/>
            <person name="Cao M."/>
            <person name="McDermott J."/>
            <person name="Samudrala R."/>
            <person name="Wang J."/>
            <person name="Wong G.K.-S."/>
            <person name="Yang H."/>
        </authorList>
    </citation>
    <scope>NUCLEOTIDE SEQUENCE [LARGE SCALE GENOMIC DNA]</scope>
    <source>
        <strain>cv. Nipponbare</strain>
    </source>
</reference>
<reference key="5">
    <citation type="journal article" date="2003" name="Science">
        <title>Collection, mapping, and annotation of over 28,000 cDNA clones from japonica rice.</title>
        <authorList>
            <consortium name="The rice full-length cDNA consortium"/>
        </authorList>
    </citation>
    <scope>NUCLEOTIDE SEQUENCE [LARGE SCALE MRNA]</scope>
    <source>
        <strain>cv. Nipponbare</strain>
    </source>
</reference>
<comment type="function">
    <text evidence="1">Involved in pre-rRNA processing and ribosome assembly.</text>
</comment>
<comment type="subcellular location">
    <subcellularLocation>
        <location evidence="1">Nucleus</location>
        <location evidence="1">Nucleolus</location>
    </subcellularLocation>
</comment>
<comment type="sequence caution" evidence="4">
    <conflict type="frameshift">
        <sequence resource="EMBL" id="AK103422"/>
    </conflict>
</comment>
<accession>Q6Z1C0</accession>
<accession>A0A0P0XCT5</accession>
<keyword id="KW-0539">Nucleus</keyword>
<keyword id="KW-1185">Reference proteome</keyword>
<keyword id="KW-0677">Repeat</keyword>
<keyword id="KW-0694">RNA-binding</keyword>
<keyword id="KW-0698">rRNA processing</keyword>
<sequence length="572" mass="60394">MGKASKKSVAVAVAPAAVPAKGKGGKKREAEDEIEKAVSAKKQKAAAAPPAKAVPAPKADAKKAKKQPPPKKAASSSSGSSSEEDSSESEEEVKVQVKKTTKPVKQESSSDESSDESSDDEDAKPADPVANNGLKKGKPASSDSESDSDDEMDEDEKPAAPVKKTSVTAQKKKDDSDSSESESDESDSDEDVPTKSKAPAVAAKNDDSTDGSESESDSEDEDAAPKGAAKKESSSDEEDDSSEESSDDEPKQPQQKKAQEESSEESSEEDSDEEDEKLAKTPKKKTPAATKSQNDEPKTPASNQSQGTESATLFMGNLSFNLNQDQVKEFFQEVGEVISVRLATHEDGSSRGFGHVQFASSEEAKKALELHGCDLDGRPVRLDLAHERGAYTPHSRNDTGSFQKQNRGSSQSIFVKGFDSSLEESKIRESLEGHFADCGEITRVSVPMDRETGASKGIAYIDFKDQASFSKALELSGSDLGGYNLYVDEAKPKGDSRDGGGRRGGRSGDRFGGRSGDRFGGRSGGRFGGRDGGRRGGRGGRDGGRRGGRGGFQSRQSAGTASTGKKTTFGDE</sequence>
<dbReference type="EMBL" id="AP005441">
    <property type="protein sequence ID" value="BAD05605.1"/>
    <property type="molecule type" value="Genomic_DNA"/>
</dbReference>
<dbReference type="EMBL" id="AP008214">
    <property type="protein sequence ID" value="BAF23092.1"/>
    <property type="molecule type" value="Genomic_DNA"/>
</dbReference>
<dbReference type="EMBL" id="AP014964">
    <property type="protein sequence ID" value="BAT04188.1"/>
    <property type="molecule type" value="Genomic_DNA"/>
</dbReference>
<dbReference type="EMBL" id="CM000145">
    <property type="protein sequence ID" value="EAZ41784.1"/>
    <property type="molecule type" value="Genomic_DNA"/>
</dbReference>
<dbReference type="EMBL" id="AK103422">
    <property type="status" value="NOT_ANNOTATED_CDS"/>
    <property type="molecule type" value="mRNA"/>
</dbReference>
<dbReference type="RefSeq" id="XP_015650883.1">
    <property type="nucleotide sequence ID" value="XM_015795397.1"/>
</dbReference>
<dbReference type="SMR" id="Q6Z1C0"/>
<dbReference type="FunCoup" id="Q6Z1C0">
    <property type="interactions" value="75"/>
</dbReference>
<dbReference type="STRING" id="39947.Q6Z1C0"/>
<dbReference type="PaxDb" id="39947-Q6Z1C0"/>
<dbReference type="EnsemblPlants" id="Os08t0192900-01">
    <property type="protein sequence ID" value="Os08t0192900-01"/>
    <property type="gene ID" value="Os08g0192900"/>
</dbReference>
<dbReference type="Gramene" id="Os08t0192900-01">
    <property type="protein sequence ID" value="Os08t0192900-01"/>
    <property type="gene ID" value="Os08g0192900"/>
</dbReference>
<dbReference type="KEGG" id="dosa:Os08g0192900"/>
<dbReference type="eggNOG" id="KOG4210">
    <property type="taxonomic scope" value="Eukaryota"/>
</dbReference>
<dbReference type="HOGENOM" id="CLU_030920_1_0_1"/>
<dbReference type="InParanoid" id="Q6Z1C0"/>
<dbReference type="OMA" id="GGFKKHN"/>
<dbReference type="OrthoDB" id="439808at2759"/>
<dbReference type="Proteomes" id="UP000000763">
    <property type="component" value="Chromosome 8"/>
</dbReference>
<dbReference type="Proteomes" id="UP000007752">
    <property type="component" value="Chromosome 8"/>
</dbReference>
<dbReference type="Proteomes" id="UP000059680">
    <property type="component" value="Chromosome 8"/>
</dbReference>
<dbReference type="ExpressionAtlas" id="Q6Z1C0">
    <property type="expression patterns" value="baseline and differential"/>
</dbReference>
<dbReference type="GO" id="GO:0005730">
    <property type="term" value="C:nucleolus"/>
    <property type="evidence" value="ECO:0000318"/>
    <property type="project" value="GO_Central"/>
</dbReference>
<dbReference type="GO" id="GO:0043024">
    <property type="term" value="F:ribosomal small subunit binding"/>
    <property type="evidence" value="ECO:0000318"/>
    <property type="project" value="GO_Central"/>
</dbReference>
<dbReference type="GO" id="GO:0033592">
    <property type="term" value="F:RNA strand annealing activity"/>
    <property type="evidence" value="ECO:0000318"/>
    <property type="project" value="GO_Central"/>
</dbReference>
<dbReference type="GO" id="GO:0034057">
    <property type="term" value="F:RNA strand-exchange activity"/>
    <property type="evidence" value="ECO:0000318"/>
    <property type="project" value="GO_Central"/>
</dbReference>
<dbReference type="GO" id="GO:0097010">
    <property type="term" value="P:eukaryotic translation initiation factor 4F complex assembly"/>
    <property type="evidence" value="ECO:0000318"/>
    <property type="project" value="GO_Central"/>
</dbReference>
<dbReference type="GO" id="GO:0001731">
    <property type="term" value="P:formation of translation preinitiation complex"/>
    <property type="evidence" value="ECO:0000318"/>
    <property type="project" value="GO_Central"/>
</dbReference>
<dbReference type="GO" id="GO:0006364">
    <property type="term" value="P:rRNA processing"/>
    <property type="evidence" value="ECO:0007669"/>
    <property type="project" value="UniProtKB-KW"/>
</dbReference>
<dbReference type="CDD" id="cd12451">
    <property type="entry name" value="RRM2_NUCLs"/>
    <property type="match status" value="1"/>
</dbReference>
<dbReference type="FunFam" id="3.30.70.330:FF:001046">
    <property type="entry name" value="Nucleolin 1"/>
    <property type="match status" value="1"/>
</dbReference>
<dbReference type="FunFam" id="3.30.70.330:FF:000563">
    <property type="entry name" value="Nucleolin 2 isoform A"/>
    <property type="match status" value="1"/>
</dbReference>
<dbReference type="Gene3D" id="3.30.70.330">
    <property type="match status" value="2"/>
</dbReference>
<dbReference type="InterPro" id="IPR034350">
    <property type="entry name" value="NUCL_RRM2"/>
</dbReference>
<dbReference type="InterPro" id="IPR012677">
    <property type="entry name" value="Nucleotide-bd_a/b_plait_sf"/>
</dbReference>
<dbReference type="InterPro" id="IPR035979">
    <property type="entry name" value="RBD_domain_sf"/>
</dbReference>
<dbReference type="InterPro" id="IPR000504">
    <property type="entry name" value="RRM_dom"/>
</dbReference>
<dbReference type="PANTHER" id="PTHR23236">
    <property type="entry name" value="EUKARYOTIC TRANSLATION INITIATION FACTOR 4B/4H"/>
    <property type="match status" value="1"/>
</dbReference>
<dbReference type="PANTHER" id="PTHR23236:SF11">
    <property type="entry name" value="EUKARYOTIC TRANSLATION INITIATION FACTOR 4H"/>
    <property type="match status" value="1"/>
</dbReference>
<dbReference type="Pfam" id="PF00076">
    <property type="entry name" value="RRM_1"/>
    <property type="match status" value="2"/>
</dbReference>
<dbReference type="SMART" id="SM00360">
    <property type="entry name" value="RRM"/>
    <property type="match status" value="2"/>
</dbReference>
<dbReference type="SUPFAM" id="SSF54928">
    <property type="entry name" value="RNA-binding domain, RBD"/>
    <property type="match status" value="2"/>
</dbReference>
<dbReference type="PROSITE" id="PS50102">
    <property type="entry name" value="RRM"/>
    <property type="match status" value="2"/>
</dbReference>
<evidence type="ECO:0000250" key="1"/>
<evidence type="ECO:0000255" key="2">
    <source>
        <dbReference type="PROSITE-ProRule" id="PRU00176"/>
    </source>
</evidence>
<evidence type="ECO:0000256" key="3">
    <source>
        <dbReference type="SAM" id="MobiDB-lite"/>
    </source>
</evidence>
<evidence type="ECO:0000305" key="4"/>
<gene>
    <name type="ordered locus">Os08g0192900</name>
    <name type="ordered locus">LOC_Os08g09350</name>
    <name type="ORF">OsJ_26324</name>
    <name type="ORF">OSJNBa0056O06.24</name>
</gene>
<name>NUCL1_ORYSJ</name>
<protein>
    <recommendedName>
        <fullName>Nucleolin 1</fullName>
    </recommendedName>
    <alternativeName>
        <fullName>Protein NUCLEOLIN LIKE 1</fullName>
    </alternativeName>
</protein>
<proteinExistence type="evidence at transcript level"/>
<organism>
    <name type="scientific">Oryza sativa subsp. japonica</name>
    <name type="common">Rice</name>
    <dbReference type="NCBI Taxonomy" id="39947"/>
    <lineage>
        <taxon>Eukaryota</taxon>
        <taxon>Viridiplantae</taxon>
        <taxon>Streptophyta</taxon>
        <taxon>Embryophyta</taxon>
        <taxon>Tracheophyta</taxon>
        <taxon>Spermatophyta</taxon>
        <taxon>Magnoliopsida</taxon>
        <taxon>Liliopsida</taxon>
        <taxon>Poales</taxon>
        <taxon>Poaceae</taxon>
        <taxon>BOP clade</taxon>
        <taxon>Oryzoideae</taxon>
        <taxon>Oryzeae</taxon>
        <taxon>Oryzinae</taxon>
        <taxon>Oryza</taxon>
        <taxon>Oryza sativa</taxon>
    </lineage>
</organism>